<evidence type="ECO:0000255" key="1">
    <source>
        <dbReference type="HAMAP-Rule" id="MF_00206"/>
    </source>
</evidence>
<evidence type="ECO:0000255" key="2">
    <source>
        <dbReference type="PROSITE-ProRule" id="PRU01266"/>
    </source>
</evidence>
<proteinExistence type="inferred from homology"/>
<keyword id="KW-0004">4Fe-4S</keyword>
<keyword id="KW-0963">Cytoplasm</keyword>
<keyword id="KW-0408">Iron</keyword>
<keyword id="KW-0411">Iron-sulfur</keyword>
<keyword id="KW-0479">Metal-binding</keyword>
<keyword id="KW-1185">Reference proteome</keyword>
<keyword id="KW-0949">S-adenosyl-L-methionine</keyword>
<keyword id="KW-0808">Transferase</keyword>
<organism>
    <name type="scientific">Protochlamydia amoebophila (strain UWE25)</name>
    <dbReference type="NCBI Taxonomy" id="264201"/>
    <lineage>
        <taxon>Bacteria</taxon>
        <taxon>Pseudomonadati</taxon>
        <taxon>Chlamydiota</taxon>
        <taxon>Chlamydiia</taxon>
        <taxon>Parachlamydiales</taxon>
        <taxon>Parachlamydiaceae</taxon>
        <taxon>Candidatus Protochlamydia</taxon>
    </lineage>
</organism>
<protein>
    <recommendedName>
        <fullName evidence="1">Lipoyl synthase</fullName>
        <ecNumber evidence="1">2.8.1.8</ecNumber>
    </recommendedName>
    <alternativeName>
        <fullName evidence="1">Lip-syn</fullName>
        <shortName evidence="1">LS</shortName>
    </alternativeName>
    <alternativeName>
        <fullName evidence="1">Lipoate synthase</fullName>
    </alternativeName>
    <alternativeName>
        <fullName evidence="1">Lipoic acid synthase</fullName>
    </alternativeName>
    <alternativeName>
        <fullName evidence="1">Sulfur insertion protein LipA</fullName>
    </alternativeName>
</protein>
<feature type="chain" id="PRO_0000325286" description="Lipoyl synthase">
    <location>
        <begin position="1"/>
        <end position="323"/>
    </location>
</feature>
<feature type="domain" description="Radical SAM core" evidence="2">
    <location>
        <begin position="73"/>
        <end position="292"/>
    </location>
</feature>
<feature type="binding site" evidence="1">
    <location>
        <position position="61"/>
    </location>
    <ligand>
        <name>[4Fe-4S] cluster</name>
        <dbReference type="ChEBI" id="CHEBI:49883"/>
        <label>1</label>
    </ligand>
</feature>
<feature type="binding site" evidence="1">
    <location>
        <position position="66"/>
    </location>
    <ligand>
        <name>[4Fe-4S] cluster</name>
        <dbReference type="ChEBI" id="CHEBI:49883"/>
        <label>1</label>
    </ligand>
</feature>
<feature type="binding site" evidence="1">
    <location>
        <position position="72"/>
    </location>
    <ligand>
        <name>[4Fe-4S] cluster</name>
        <dbReference type="ChEBI" id="CHEBI:49883"/>
        <label>1</label>
    </ligand>
</feature>
<feature type="binding site" evidence="1">
    <location>
        <position position="87"/>
    </location>
    <ligand>
        <name>[4Fe-4S] cluster</name>
        <dbReference type="ChEBI" id="CHEBI:49883"/>
        <label>2</label>
        <note>4Fe-4S-S-AdoMet</note>
    </ligand>
</feature>
<feature type="binding site" evidence="1">
    <location>
        <position position="91"/>
    </location>
    <ligand>
        <name>[4Fe-4S] cluster</name>
        <dbReference type="ChEBI" id="CHEBI:49883"/>
        <label>2</label>
        <note>4Fe-4S-S-AdoMet</note>
    </ligand>
</feature>
<feature type="binding site" evidence="1">
    <location>
        <position position="94"/>
    </location>
    <ligand>
        <name>[4Fe-4S] cluster</name>
        <dbReference type="ChEBI" id="CHEBI:49883"/>
        <label>2</label>
        <note>4Fe-4S-S-AdoMet</note>
    </ligand>
</feature>
<feature type="binding site" evidence="1">
    <location>
        <position position="303"/>
    </location>
    <ligand>
        <name>[4Fe-4S] cluster</name>
        <dbReference type="ChEBI" id="CHEBI:49883"/>
        <label>1</label>
    </ligand>
</feature>
<gene>
    <name evidence="1" type="primary">lipA</name>
    <name type="ordered locus">pc0152</name>
</gene>
<accession>Q6MEX3</accession>
<dbReference type="EC" id="2.8.1.8" evidence="1"/>
<dbReference type="EMBL" id="BX908798">
    <property type="protein sequence ID" value="CAF22876.1"/>
    <property type="molecule type" value="Genomic_DNA"/>
</dbReference>
<dbReference type="SMR" id="Q6MEX3"/>
<dbReference type="STRING" id="264201.pc0152"/>
<dbReference type="eggNOG" id="COG0320">
    <property type="taxonomic scope" value="Bacteria"/>
</dbReference>
<dbReference type="HOGENOM" id="CLU_033144_2_1_0"/>
<dbReference type="UniPathway" id="UPA00538">
    <property type="reaction ID" value="UER00593"/>
</dbReference>
<dbReference type="Proteomes" id="UP000000529">
    <property type="component" value="Chromosome"/>
</dbReference>
<dbReference type="GO" id="GO:0005737">
    <property type="term" value="C:cytoplasm"/>
    <property type="evidence" value="ECO:0007669"/>
    <property type="project" value="UniProtKB-SubCell"/>
</dbReference>
<dbReference type="GO" id="GO:0051539">
    <property type="term" value="F:4 iron, 4 sulfur cluster binding"/>
    <property type="evidence" value="ECO:0007669"/>
    <property type="project" value="UniProtKB-UniRule"/>
</dbReference>
<dbReference type="GO" id="GO:0016992">
    <property type="term" value="F:lipoate synthase activity"/>
    <property type="evidence" value="ECO:0007669"/>
    <property type="project" value="UniProtKB-UniRule"/>
</dbReference>
<dbReference type="GO" id="GO:0046872">
    <property type="term" value="F:metal ion binding"/>
    <property type="evidence" value="ECO:0007669"/>
    <property type="project" value="UniProtKB-KW"/>
</dbReference>
<dbReference type="CDD" id="cd01335">
    <property type="entry name" value="Radical_SAM"/>
    <property type="match status" value="1"/>
</dbReference>
<dbReference type="FunFam" id="3.20.20.70:FF:000186">
    <property type="entry name" value="Lipoyl synthase"/>
    <property type="match status" value="1"/>
</dbReference>
<dbReference type="Gene3D" id="3.20.20.70">
    <property type="entry name" value="Aldolase class I"/>
    <property type="match status" value="1"/>
</dbReference>
<dbReference type="HAMAP" id="MF_00206">
    <property type="entry name" value="Lipoyl_synth"/>
    <property type="match status" value="1"/>
</dbReference>
<dbReference type="InterPro" id="IPR013785">
    <property type="entry name" value="Aldolase_TIM"/>
</dbReference>
<dbReference type="InterPro" id="IPR006638">
    <property type="entry name" value="Elp3/MiaA/NifB-like_rSAM"/>
</dbReference>
<dbReference type="InterPro" id="IPR003698">
    <property type="entry name" value="Lipoyl_synth"/>
</dbReference>
<dbReference type="InterPro" id="IPR007197">
    <property type="entry name" value="rSAM"/>
</dbReference>
<dbReference type="NCBIfam" id="TIGR00510">
    <property type="entry name" value="lipA"/>
    <property type="match status" value="1"/>
</dbReference>
<dbReference type="NCBIfam" id="NF004019">
    <property type="entry name" value="PRK05481.1"/>
    <property type="match status" value="1"/>
</dbReference>
<dbReference type="NCBIfam" id="NF009544">
    <property type="entry name" value="PRK12928.1"/>
    <property type="match status" value="1"/>
</dbReference>
<dbReference type="PANTHER" id="PTHR10949">
    <property type="entry name" value="LIPOYL SYNTHASE"/>
    <property type="match status" value="1"/>
</dbReference>
<dbReference type="PANTHER" id="PTHR10949:SF0">
    <property type="entry name" value="LIPOYL SYNTHASE, MITOCHONDRIAL"/>
    <property type="match status" value="1"/>
</dbReference>
<dbReference type="Pfam" id="PF04055">
    <property type="entry name" value="Radical_SAM"/>
    <property type="match status" value="1"/>
</dbReference>
<dbReference type="PIRSF" id="PIRSF005963">
    <property type="entry name" value="Lipoyl_synth"/>
    <property type="match status" value="1"/>
</dbReference>
<dbReference type="SFLD" id="SFLDF00271">
    <property type="entry name" value="lipoyl_synthase"/>
    <property type="match status" value="1"/>
</dbReference>
<dbReference type="SFLD" id="SFLDG01058">
    <property type="entry name" value="lipoyl_synthase_like"/>
    <property type="match status" value="1"/>
</dbReference>
<dbReference type="SMART" id="SM00729">
    <property type="entry name" value="Elp3"/>
    <property type="match status" value="1"/>
</dbReference>
<dbReference type="SUPFAM" id="SSF102114">
    <property type="entry name" value="Radical SAM enzymes"/>
    <property type="match status" value="1"/>
</dbReference>
<dbReference type="PROSITE" id="PS51918">
    <property type="entry name" value="RADICAL_SAM"/>
    <property type="match status" value="1"/>
</dbReference>
<sequence>MMENSPKTRRLNILPDNPENTGDGVVGLGRFPSWLHRPLPKGNQLQITGQVINQNRLHTVCEEAKCPNLLECWTKKTATFLVMGKECSRNCGFCDIDFSKNPKPLDRSEPSRVALSVQQLGLKHVVITMVARDDLSDGGSSHLVEVIEAIRQTNEDVTIEVLTSDFEGNRKALSFVLQAKPEIFNHNIETVRRLTPRVRHKATYERTLSVLEQAAQKKYHSQLKVKSGIMVGLGETEEEIFETLLDLKRVGCEIVTIGQYLQPNRQKLLVKSFVHPDIFKKYEQYGLSIGIPHLYCGPFVRSSYNANLVLMRANQKEAIVNSE</sequence>
<reference key="1">
    <citation type="journal article" date="2004" name="Science">
        <title>Illuminating the evolutionary history of chlamydiae.</title>
        <authorList>
            <person name="Horn M."/>
            <person name="Collingro A."/>
            <person name="Schmitz-Esser S."/>
            <person name="Beier C.L."/>
            <person name="Purkhold U."/>
            <person name="Fartmann B."/>
            <person name="Brandt P."/>
            <person name="Nyakatura G.J."/>
            <person name="Droege M."/>
            <person name="Frishman D."/>
            <person name="Rattei T."/>
            <person name="Mewes H.-W."/>
            <person name="Wagner M."/>
        </authorList>
    </citation>
    <scope>NUCLEOTIDE SEQUENCE [LARGE SCALE GENOMIC DNA]</scope>
    <source>
        <strain>UWE25</strain>
    </source>
</reference>
<name>LIPA_PARUW</name>
<comment type="function">
    <text evidence="1">Catalyzes the radical-mediated insertion of two sulfur atoms into the C-6 and C-8 positions of the octanoyl moiety bound to the lipoyl domains of lipoate-dependent enzymes, thereby converting the octanoylated domains into lipoylated derivatives.</text>
</comment>
<comment type="catalytic activity">
    <reaction evidence="1">
        <text>[[Fe-S] cluster scaffold protein carrying a second [4Fe-4S](2+) cluster] + N(6)-octanoyl-L-lysyl-[protein] + 2 oxidized [2Fe-2S]-[ferredoxin] + 2 S-adenosyl-L-methionine + 4 H(+) = [[Fe-S] cluster scaffold protein] + N(6)-[(R)-dihydrolipoyl]-L-lysyl-[protein] + 4 Fe(3+) + 2 hydrogen sulfide + 2 5'-deoxyadenosine + 2 L-methionine + 2 reduced [2Fe-2S]-[ferredoxin]</text>
        <dbReference type="Rhea" id="RHEA:16585"/>
        <dbReference type="Rhea" id="RHEA-COMP:9928"/>
        <dbReference type="Rhea" id="RHEA-COMP:10000"/>
        <dbReference type="Rhea" id="RHEA-COMP:10001"/>
        <dbReference type="Rhea" id="RHEA-COMP:10475"/>
        <dbReference type="Rhea" id="RHEA-COMP:14568"/>
        <dbReference type="Rhea" id="RHEA-COMP:14569"/>
        <dbReference type="ChEBI" id="CHEBI:15378"/>
        <dbReference type="ChEBI" id="CHEBI:17319"/>
        <dbReference type="ChEBI" id="CHEBI:29034"/>
        <dbReference type="ChEBI" id="CHEBI:29919"/>
        <dbReference type="ChEBI" id="CHEBI:33722"/>
        <dbReference type="ChEBI" id="CHEBI:33737"/>
        <dbReference type="ChEBI" id="CHEBI:33738"/>
        <dbReference type="ChEBI" id="CHEBI:57844"/>
        <dbReference type="ChEBI" id="CHEBI:59789"/>
        <dbReference type="ChEBI" id="CHEBI:78809"/>
        <dbReference type="ChEBI" id="CHEBI:83100"/>
        <dbReference type="EC" id="2.8.1.8"/>
    </reaction>
</comment>
<comment type="cofactor">
    <cofactor evidence="1">
        <name>[4Fe-4S] cluster</name>
        <dbReference type="ChEBI" id="CHEBI:49883"/>
    </cofactor>
    <text evidence="1">Binds 2 [4Fe-4S] clusters per subunit. One cluster is coordinated with 3 cysteines and an exchangeable S-adenosyl-L-methionine.</text>
</comment>
<comment type="pathway">
    <text evidence="1">Protein modification; protein lipoylation via endogenous pathway; protein N(6)-(lipoyl)lysine from octanoyl-[acyl-carrier-protein]: step 2/2.</text>
</comment>
<comment type="subcellular location">
    <subcellularLocation>
        <location evidence="1">Cytoplasm</location>
    </subcellularLocation>
</comment>
<comment type="similarity">
    <text evidence="1">Belongs to the radical SAM superfamily. Lipoyl synthase family.</text>
</comment>